<feature type="chain" id="PRO_0000381323" description="Biotin synthase">
    <location>
        <begin position="1"/>
        <end position="320"/>
    </location>
</feature>
<feature type="domain" description="Radical SAM core" evidence="2">
    <location>
        <begin position="46"/>
        <end position="275"/>
    </location>
</feature>
<feature type="binding site" evidence="1">
    <location>
        <position position="64"/>
    </location>
    <ligand>
        <name>[4Fe-4S] cluster</name>
        <dbReference type="ChEBI" id="CHEBI:49883"/>
        <note>4Fe-4S-S-AdoMet</note>
    </ligand>
</feature>
<feature type="binding site" evidence="1">
    <location>
        <position position="68"/>
    </location>
    <ligand>
        <name>[4Fe-4S] cluster</name>
        <dbReference type="ChEBI" id="CHEBI:49883"/>
        <note>4Fe-4S-S-AdoMet</note>
    </ligand>
</feature>
<feature type="binding site" evidence="1">
    <location>
        <position position="71"/>
    </location>
    <ligand>
        <name>[4Fe-4S] cluster</name>
        <dbReference type="ChEBI" id="CHEBI:49883"/>
        <note>4Fe-4S-S-AdoMet</note>
    </ligand>
</feature>
<feature type="binding site" evidence="1">
    <location>
        <position position="108"/>
    </location>
    <ligand>
        <name>[2Fe-2S] cluster</name>
        <dbReference type="ChEBI" id="CHEBI:190135"/>
    </ligand>
</feature>
<feature type="binding site" evidence="1">
    <location>
        <position position="140"/>
    </location>
    <ligand>
        <name>[2Fe-2S] cluster</name>
        <dbReference type="ChEBI" id="CHEBI:190135"/>
    </ligand>
</feature>
<feature type="binding site" evidence="1">
    <location>
        <position position="200"/>
    </location>
    <ligand>
        <name>[2Fe-2S] cluster</name>
        <dbReference type="ChEBI" id="CHEBI:190135"/>
    </ligand>
</feature>
<feature type="binding site" evidence="1">
    <location>
        <position position="270"/>
    </location>
    <ligand>
        <name>[2Fe-2S] cluster</name>
        <dbReference type="ChEBI" id="CHEBI:190135"/>
    </ligand>
</feature>
<sequence>MDFLTLMENKLDEGRMITFEEAVELAKGKIEDEKLFLLADKLCKKNMGRRVDLCSIINAKSGGCSENCKFCAQSGHYDTGVKIYPLLDVDDVLKAAKENEKEGVHRFSLVTSGKSVSDEEFEKILGIYSVLRKETNLKLCASLGSLSYERAVRLKEAGVSMYHHNIETCREYYPKICDTHTYDDRINTVKNAAKAGLEICCGGIIGMGESMEQRIKMAFEIRELGVKSVPINVLNPIKGTPFENVRSLSPDEILRTIALFRLIMPYAHIRYAGGRMCLGEHQSKGFKAGVSAMLVGNYLTTVGNKISDDLEMIQRMGLEI</sequence>
<organism>
    <name type="scientific">Acetivibrio thermocellus (strain ATCC 27405 / DSM 1237 / JCM 9322 / NBRC 103400 / NCIMB 10682 / NRRL B-4536 / VPI 7372)</name>
    <name type="common">Clostridium thermocellum</name>
    <dbReference type="NCBI Taxonomy" id="203119"/>
    <lineage>
        <taxon>Bacteria</taxon>
        <taxon>Bacillati</taxon>
        <taxon>Bacillota</taxon>
        <taxon>Clostridia</taxon>
        <taxon>Eubacteriales</taxon>
        <taxon>Oscillospiraceae</taxon>
        <taxon>Acetivibrio</taxon>
    </lineage>
</organism>
<evidence type="ECO:0000255" key="1">
    <source>
        <dbReference type="HAMAP-Rule" id="MF_01694"/>
    </source>
</evidence>
<evidence type="ECO:0000255" key="2">
    <source>
        <dbReference type="PROSITE-ProRule" id="PRU01266"/>
    </source>
</evidence>
<protein>
    <recommendedName>
        <fullName evidence="1">Biotin synthase</fullName>
        <ecNumber evidence="1">2.8.1.6</ecNumber>
    </recommendedName>
</protein>
<keyword id="KW-0001">2Fe-2S</keyword>
<keyword id="KW-0004">4Fe-4S</keyword>
<keyword id="KW-0093">Biotin biosynthesis</keyword>
<keyword id="KW-0408">Iron</keyword>
<keyword id="KW-0411">Iron-sulfur</keyword>
<keyword id="KW-0479">Metal-binding</keyword>
<keyword id="KW-1185">Reference proteome</keyword>
<keyword id="KW-0949">S-adenosyl-L-methionine</keyword>
<keyword id="KW-0808">Transferase</keyword>
<comment type="function">
    <text evidence="1">Catalyzes the conversion of dethiobiotin (DTB) to biotin by the insertion of a sulfur atom into dethiobiotin via a radical-based mechanism.</text>
</comment>
<comment type="catalytic activity">
    <reaction evidence="1">
        <text>(4R,5S)-dethiobiotin + (sulfur carrier)-SH + 2 reduced [2Fe-2S]-[ferredoxin] + 2 S-adenosyl-L-methionine = (sulfur carrier)-H + biotin + 2 5'-deoxyadenosine + 2 L-methionine + 2 oxidized [2Fe-2S]-[ferredoxin]</text>
        <dbReference type="Rhea" id="RHEA:22060"/>
        <dbReference type="Rhea" id="RHEA-COMP:10000"/>
        <dbReference type="Rhea" id="RHEA-COMP:10001"/>
        <dbReference type="Rhea" id="RHEA-COMP:14737"/>
        <dbReference type="Rhea" id="RHEA-COMP:14739"/>
        <dbReference type="ChEBI" id="CHEBI:17319"/>
        <dbReference type="ChEBI" id="CHEBI:29917"/>
        <dbReference type="ChEBI" id="CHEBI:33737"/>
        <dbReference type="ChEBI" id="CHEBI:33738"/>
        <dbReference type="ChEBI" id="CHEBI:57586"/>
        <dbReference type="ChEBI" id="CHEBI:57844"/>
        <dbReference type="ChEBI" id="CHEBI:59789"/>
        <dbReference type="ChEBI" id="CHEBI:64428"/>
        <dbReference type="ChEBI" id="CHEBI:149473"/>
        <dbReference type="EC" id="2.8.1.6"/>
    </reaction>
</comment>
<comment type="cofactor">
    <cofactor evidence="1">
        <name>[4Fe-4S] cluster</name>
        <dbReference type="ChEBI" id="CHEBI:49883"/>
    </cofactor>
    <text evidence="1">Binds 1 [4Fe-4S] cluster. The cluster is coordinated with 3 cysteines and an exchangeable S-adenosyl-L-methionine.</text>
</comment>
<comment type="cofactor">
    <cofactor evidence="1">
        <name>[2Fe-2S] cluster</name>
        <dbReference type="ChEBI" id="CHEBI:190135"/>
    </cofactor>
    <text evidence="1">Binds 1 [2Fe-2S] cluster. The cluster is coordinated with 3 cysteines and 1 arginine.</text>
</comment>
<comment type="pathway">
    <text evidence="1">Cofactor biosynthesis; biotin biosynthesis; biotin from 7,8-diaminononanoate: step 2/2.</text>
</comment>
<comment type="subunit">
    <text evidence="1">Homodimer.</text>
</comment>
<comment type="similarity">
    <text evidence="1">Belongs to the radical SAM superfamily. Biotin synthase family.</text>
</comment>
<gene>
    <name evidence="1" type="primary">bioB</name>
    <name type="ordered locus">Cthe_0020</name>
</gene>
<reference key="1">
    <citation type="submission" date="2007-02" db="EMBL/GenBank/DDBJ databases">
        <title>Complete sequence of Clostridium thermocellum ATCC 27405.</title>
        <authorList>
            <consortium name="US DOE Joint Genome Institute"/>
            <person name="Copeland A."/>
            <person name="Lucas S."/>
            <person name="Lapidus A."/>
            <person name="Barry K."/>
            <person name="Detter J.C."/>
            <person name="Glavina del Rio T."/>
            <person name="Hammon N."/>
            <person name="Israni S."/>
            <person name="Dalin E."/>
            <person name="Tice H."/>
            <person name="Pitluck S."/>
            <person name="Chertkov O."/>
            <person name="Brettin T."/>
            <person name="Bruce D."/>
            <person name="Han C."/>
            <person name="Tapia R."/>
            <person name="Gilna P."/>
            <person name="Schmutz J."/>
            <person name="Larimer F."/>
            <person name="Land M."/>
            <person name="Hauser L."/>
            <person name="Kyrpides N."/>
            <person name="Mikhailova N."/>
            <person name="Wu J.H.D."/>
            <person name="Newcomb M."/>
            <person name="Richardson P."/>
        </authorList>
    </citation>
    <scope>NUCLEOTIDE SEQUENCE [LARGE SCALE GENOMIC DNA]</scope>
    <source>
        <strain>ATCC 27405 / DSM 1237 / JCM 9322 / NBRC 103400 / NCIMB 10682 / NRRL B-4536 / VPI 7372</strain>
    </source>
</reference>
<proteinExistence type="inferred from homology"/>
<name>BIOB_ACET2</name>
<accession>A3DBD3</accession>
<dbReference type="EC" id="2.8.1.6" evidence="1"/>
<dbReference type="EMBL" id="CP000568">
    <property type="protein sequence ID" value="ABN51262.1"/>
    <property type="molecule type" value="Genomic_DNA"/>
</dbReference>
<dbReference type="RefSeq" id="WP_003511922.1">
    <property type="nucleotide sequence ID" value="NC_009012.1"/>
</dbReference>
<dbReference type="SMR" id="A3DBD3"/>
<dbReference type="STRING" id="203119.Cthe_0020"/>
<dbReference type="GeneID" id="35804175"/>
<dbReference type="KEGG" id="cth:Cthe_0020"/>
<dbReference type="eggNOG" id="COG0502">
    <property type="taxonomic scope" value="Bacteria"/>
</dbReference>
<dbReference type="HOGENOM" id="CLU_033172_2_1_9"/>
<dbReference type="OrthoDB" id="9786826at2"/>
<dbReference type="UniPathway" id="UPA00078">
    <property type="reaction ID" value="UER00162"/>
</dbReference>
<dbReference type="Proteomes" id="UP000002145">
    <property type="component" value="Chromosome"/>
</dbReference>
<dbReference type="GO" id="GO:0051537">
    <property type="term" value="F:2 iron, 2 sulfur cluster binding"/>
    <property type="evidence" value="ECO:0007669"/>
    <property type="project" value="UniProtKB-KW"/>
</dbReference>
<dbReference type="GO" id="GO:0051539">
    <property type="term" value="F:4 iron, 4 sulfur cluster binding"/>
    <property type="evidence" value="ECO:0007669"/>
    <property type="project" value="UniProtKB-KW"/>
</dbReference>
<dbReference type="GO" id="GO:0004076">
    <property type="term" value="F:biotin synthase activity"/>
    <property type="evidence" value="ECO:0007669"/>
    <property type="project" value="UniProtKB-UniRule"/>
</dbReference>
<dbReference type="GO" id="GO:0005506">
    <property type="term" value="F:iron ion binding"/>
    <property type="evidence" value="ECO:0007669"/>
    <property type="project" value="UniProtKB-UniRule"/>
</dbReference>
<dbReference type="GO" id="GO:0009102">
    <property type="term" value="P:biotin biosynthetic process"/>
    <property type="evidence" value="ECO:0007669"/>
    <property type="project" value="UniProtKB-UniRule"/>
</dbReference>
<dbReference type="CDD" id="cd01335">
    <property type="entry name" value="Radical_SAM"/>
    <property type="match status" value="1"/>
</dbReference>
<dbReference type="FunFam" id="3.20.20.70:FF:000026">
    <property type="entry name" value="Biotin synthase"/>
    <property type="match status" value="1"/>
</dbReference>
<dbReference type="Gene3D" id="3.20.20.70">
    <property type="entry name" value="Aldolase class I"/>
    <property type="match status" value="1"/>
</dbReference>
<dbReference type="HAMAP" id="MF_01694">
    <property type="entry name" value="BioB"/>
    <property type="match status" value="1"/>
</dbReference>
<dbReference type="InterPro" id="IPR013785">
    <property type="entry name" value="Aldolase_TIM"/>
</dbReference>
<dbReference type="InterPro" id="IPR010722">
    <property type="entry name" value="BATS_dom"/>
</dbReference>
<dbReference type="InterPro" id="IPR002684">
    <property type="entry name" value="Biotin_synth/BioAB"/>
</dbReference>
<dbReference type="InterPro" id="IPR024177">
    <property type="entry name" value="Biotin_synthase"/>
</dbReference>
<dbReference type="InterPro" id="IPR006638">
    <property type="entry name" value="Elp3/MiaA/NifB-like_rSAM"/>
</dbReference>
<dbReference type="InterPro" id="IPR007197">
    <property type="entry name" value="rSAM"/>
</dbReference>
<dbReference type="NCBIfam" id="TIGR00433">
    <property type="entry name" value="bioB"/>
    <property type="match status" value="1"/>
</dbReference>
<dbReference type="PANTHER" id="PTHR22976">
    <property type="entry name" value="BIOTIN SYNTHASE"/>
    <property type="match status" value="1"/>
</dbReference>
<dbReference type="PANTHER" id="PTHR22976:SF2">
    <property type="entry name" value="BIOTIN SYNTHASE, MITOCHONDRIAL"/>
    <property type="match status" value="1"/>
</dbReference>
<dbReference type="Pfam" id="PF06968">
    <property type="entry name" value="BATS"/>
    <property type="match status" value="1"/>
</dbReference>
<dbReference type="Pfam" id="PF04055">
    <property type="entry name" value="Radical_SAM"/>
    <property type="match status" value="1"/>
</dbReference>
<dbReference type="PIRSF" id="PIRSF001619">
    <property type="entry name" value="Biotin_synth"/>
    <property type="match status" value="1"/>
</dbReference>
<dbReference type="SFLD" id="SFLDG01278">
    <property type="entry name" value="biotin_synthase_like"/>
    <property type="match status" value="1"/>
</dbReference>
<dbReference type="SFLD" id="SFLDS00029">
    <property type="entry name" value="Radical_SAM"/>
    <property type="match status" value="1"/>
</dbReference>
<dbReference type="SMART" id="SM00876">
    <property type="entry name" value="BATS"/>
    <property type="match status" value="1"/>
</dbReference>
<dbReference type="SMART" id="SM00729">
    <property type="entry name" value="Elp3"/>
    <property type="match status" value="1"/>
</dbReference>
<dbReference type="SUPFAM" id="SSF102114">
    <property type="entry name" value="Radical SAM enzymes"/>
    <property type="match status" value="1"/>
</dbReference>
<dbReference type="PROSITE" id="PS51918">
    <property type="entry name" value="RADICAL_SAM"/>
    <property type="match status" value="1"/>
</dbReference>